<proteinExistence type="inferred from homology"/>
<feature type="chain" id="PRO_1000190184" description="N-acetylmuramic acid 6-phosphate etherase">
    <location>
        <begin position="1"/>
        <end position="298"/>
    </location>
</feature>
<feature type="domain" description="SIS" evidence="1">
    <location>
        <begin position="55"/>
        <end position="218"/>
    </location>
</feature>
<feature type="active site" description="Proton donor" evidence="1">
    <location>
        <position position="83"/>
    </location>
</feature>
<feature type="active site" evidence="1">
    <location>
        <position position="114"/>
    </location>
</feature>
<sequence length="298" mass="31112">MQLEKMITEGSNAASAEIDRVSTLEMCRIINDEDKTVPLAVERVLPDIAAAIDVIHAQVSGGGRLIYIGAGTSGRLGILDASECPPTYGVKPGLVVGLIAGGEYAIQHAVEGAEDSREGGVNDLKNIGLTAQDVVVGIAASGRTPYVIAGLEYARQLGCRTVGISCNPGSAVSTTAEFAITPVVGAEVVTGSSRMKAGTAQKLVLNMLSTGLMIKSGKVFGNLMVDVVATNEKLHVRQVNIVKNATGCNAEKAEAALIACERNCKTAIVMVLKNLDAAEAKKRLDQHGGFIRQVLDKE</sequence>
<reference key="1">
    <citation type="journal article" date="2009" name="PLoS Genet.">
        <title>Organised genome dynamics in the Escherichia coli species results in highly diverse adaptive paths.</title>
        <authorList>
            <person name="Touchon M."/>
            <person name="Hoede C."/>
            <person name="Tenaillon O."/>
            <person name="Barbe V."/>
            <person name="Baeriswyl S."/>
            <person name="Bidet P."/>
            <person name="Bingen E."/>
            <person name="Bonacorsi S."/>
            <person name="Bouchier C."/>
            <person name="Bouvet O."/>
            <person name="Calteau A."/>
            <person name="Chiapello H."/>
            <person name="Clermont O."/>
            <person name="Cruveiller S."/>
            <person name="Danchin A."/>
            <person name="Diard M."/>
            <person name="Dossat C."/>
            <person name="Karoui M.E."/>
            <person name="Frapy E."/>
            <person name="Garry L."/>
            <person name="Ghigo J.M."/>
            <person name="Gilles A.M."/>
            <person name="Johnson J."/>
            <person name="Le Bouguenec C."/>
            <person name="Lescat M."/>
            <person name="Mangenot S."/>
            <person name="Martinez-Jehanne V."/>
            <person name="Matic I."/>
            <person name="Nassif X."/>
            <person name="Oztas S."/>
            <person name="Petit M.A."/>
            <person name="Pichon C."/>
            <person name="Rouy Z."/>
            <person name="Ruf C.S."/>
            <person name="Schneider D."/>
            <person name="Tourret J."/>
            <person name="Vacherie B."/>
            <person name="Vallenet D."/>
            <person name="Medigue C."/>
            <person name="Rocha E.P.C."/>
            <person name="Denamur E."/>
        </authorList>
    </citation>
    <scope>NUCLEOTIDE SEQUENCE [LARGE SCALE GENOMIC DNA]</scope>
    <source>
        <strain>ATCC 35469 / DSM 13698 / BCRC 15582 / CCUG 18766 / IAM 14443 / JCM 21226 / LMG 7866 / NBRC 102419 / NCTC 12128 / CDC 0568-73</strain>
    </source>
</reference>
<dbReference type="EC" id="4.2.1.126" evidence="1"/>
<dbReference type="EMBL" id="CU928158">
    <property type="protein sequence ID" value="CAQ88285.1"/>
    <property type="molecule type" value="Genomic_DNA"/>
</dbReference>
<dbReference type="RefSeq" id="WP_001175599.1">
    <property type="nucleotide sequence ID" value="NC_011740.1"/>
</dbReference>
<dbReference type="SMR" id="B7LKK7"/>
<dbReference type="GeneID" id="75058198"/>
<dbReference type="KEGG" id="efe:EFER_0744"/>
<dbReference type="HOGENOM" id="CLU_049049_1_1_6"/>
<dbReference type="OrthoDB" id="9813395at2"/>
<dbReference type="UniPathway" id="UPA00342"/>
<dbReference type="UniPathway" id="UPA00343"/>
<dbReference type="UniPathway" id="UPA00544"/>
<dbReference type="Proteomes" id="UP000000745">
    <property type="component" value="Chromosome"/>
</dbReference>
<dbReference type="GO" id="GO:0097367">
    <property type="term" value="F:carbohydrate derivative binding"/>
    <property type="evidence" value="ECO:0007669"/>
    <property type="project" value="InterPro"/>
</dbReference>
<dbReference type="GO" id="GO:0016835">
    <property type="term" value="F:carbon-oxygen lyase activity"/>
    <property type="evidence" value="ECO:0007669"/>
    <property type="project" value="UniProtKB-UniRule"/>
</dbReference>
<dbReference type="GO" id="GO:0016803">
    <property type="term" value="F:ether hydrolase activity"/>
    <property type="evidence" value="ECO:0007669"/>
    <property type="project" value="TreeGrafter"/>
</dbReference>
<dbReference type="GO" id="GO:0097175">
    <property type="term" value="P:1,6-anhydro-N-acetyl-beta-muramic acid catabolic process"/>
    <property type="evidence" value="ECO:0007669"/>
    <property type="project" value="UniProtKB-UniRule"/>
</dbReference>
<dbReference type="GO" id="GO:0046348">
    <property type="term" value="P:amino sugar catabolic process"/>
    <property type="evidence" value="ECO:0007669"/>
    <property type="project" value="InterPro"/>
</dbReference>
<dbReference type="GO" id="GO:0097173">
    <property type="term" value="P:N-acetylmuramic acid catabolic process"/>
    <property type="evidence" value="ECO:0007669"/>
    <property type="project" value="UniProtKB-UniPathway"/>
</dbReference>
<dbReference type="GO" id="GO:0009254">
    <property type="term" value="P:peptidoglycan turnover"/>
    <property type="evidence" value="ECO:0007669"/>
    <property type="project" value="UniProtKB-UniRule"/>
</dbReference>
<dbReference type="CDD" id="cd05007">
    <property type="entry name" value="SIS_Etherase"/>
    <property type="match status" value="1"/>
</dbReference>
<dbReference type="FunFam" id="1.10.8.1080:FF:000001">
    <property type="entry name" value="N-acetylmuramic acid 6-phosphate etherase"/>
    <property type="match status" value="1"/>
</dbReference>
<dbReference type="FunFam" id="3.40.50.10490:FF:000014">
    <property type="entry name" value="N-acetylmuramic acid 6-phosphate etherase"/>
    <property type="match status" value="1"/>
</dbReference>
<dbReference type="Gene3D" id="1.10.8.1080">
    <property type="match status" value="1"/>
</dbReference>
<dbReference type="Gene3D" id="3.40.50.10490">
    <property type="entry name" value="Glucose-6-phosphate isomerase like protein, domain 1"/>
    <property type="match status" value="1"/>
</dbReference>
<dbReference type="HAMAP" id="MF_00068">
    <property type="entry name" value="MurQ"/>
    <property type="match status" value="1"/>
</dbReference>
<dbReference type="InterPro" id="IPR005488">
    <property type="entry name" value="Etherase_MurQ"/>
</dbReference>
<dbReference type="InterPro" id="IPR005486">
    <property type="entry name" value="Glucokinase_regulatory_CS"/>
</dbReference>
<dbReference type="InterPro" id="IPR040190">
    <property type="entry name" value="MURQ/GCKR"/>
</dbReference>
<dbReference type="InterPro" id="IPR001347">
    <property type="entry name" value="SIS_dom"/>
</dbReference>
<dbReference type="InterPro" id="IPR046348">
    <property type="entry name" value="SIS_dom_sf"/>
</dbReference>
<dbReference type="NCBIfam" id="TIGR00274">
    <property type="entry name" value="N-acetylmuramic acid 6-phosphate etherase"/>
    <property type="match status" value="1"/>
</dbReference>
<dbReference type="NCBIfam" id="NF003915">
    <property type="entry name" value="PRK05441.1"/>
    <property type="match status" value="1"/>
</dbReference>
<dbReference type="NCBIfam" id="NF009222">
    <property type="entry name" value="PRK12570.1"/>
    <property type="match status" value="1"/>
</dbReference>
<dbReference type="PANTHER" id="PTHR10088">
    <property type="entry name" value="GLUCOKINASE REGULATORY PROTEIN"/>
    <property type="match status" value="1"/>
</dbReference>
<dbReference type="PANTHER" id="PTHR10088:SF4">
    <property type="entry name" value="GLUCOKINASE REGULATORY PROTEIN"/>
    <property type="match status" value="1"/>
</dbReference>
<dbReference type="Pfam" id="PF22645">
    <property type="entry name" value="GKRP_SIS_N"/>
    <property type="match status" value="1"/>
</dbReference>
<dbReference type="SUPFAM" id="SSF53697">
    <property type="entry name" value="SIS domain"/>
    <property type="match status" value="1"/>
</dbReference>
<dbReference type="PROSITE" id="PS01272">
    <property type="entry name" value="GCKR"/>
    <property type="match status" value="1"/>
</dbReference>
<dbReference type="PROSITE" id="PS51464">
    <property type="entry name" value="SIS"/>
    <property type="match status" value="1"/>
</dbReference>
<accession>B7LKK7</accession>
<comment type="function">
    <text evidence="1">Specifically catalyzes the cleavage of the D-lactyl ether substituent of MurNAc 6-phosphate, producing GlcNAc 6-phosphate and D-lactate. Together with AnmK, is also required for the utilization of anhydro-N-acetylmuramic acid (anhMurNAc) either imported from the medium or derived from its own cell wall murein, and thus plays a role in cell wall recycling.</text>
</comment>
<comment type="catalytic activity">
    <reaction evidence="1">
        <text>N-acetyl-D-muramate 6-phosphate + H2O = N-acetyl-D-glucosamine 6-phosphate + (R)-lactate</text>
        <dbReference type="Rhea" id="RHEA:26410"/>
        <dbReference type="ChEBI" id="CHEBI:15377"/>
        <dbReference type="ChEBI" id="CHEBI:16004"/>
        <dbReference type="ChEBI" id="CHEBI:57513"/>
        <dbReference type="ChEBI" id="CHEBI:58722"/>
        <dbReference type="EC" id="4.2.1.126"/>
    </reaction>
</comment>
<comment type="pathway">
    <text evidence="1">Amino-sugar metabolism; 1,6-anhydro-N-acetylmuramate degradation.</text>
</comment>
<comment type="pathway">
    <text evidence="1">Amino-sugar metabolism; N-acetylmuramate degradation.</text>
</comment>
<comment type="pathway">
    <text evidence="1">Cell wall biogenesis; peptidoglycan recycling.</text>
</comment>
<comment type="subunit">
    <text evidence="1">Homodimer.</text>
</comment>
<comment type="induction">
    <text evidence="1">Induced by MurNAc 6-phosphate that releases the repressor MurR from the DNA. Repressed by MurR in the absence of MurNAc 6-phosphate.</text>
</comment>
<comment type="miscellaneous">
    <text evidence="1">A lyase-type mechanism (elimination/hydration) is suggested for the cleavage of the lactyl ether bond of MurNAc 6-phosphate, with the formation of an alpha,beta-unsaturated aldehyde intermediate with (E)-stereochemistry, followed by the syn addition of water to give product.</text>
</comment>
<comment type="similarity">
    <text evidence="1">Belongs to the GCKR-like family. MurNAc-6-P etherase subfamily.</text>
</comment>
<organism>
    <name type="scientific">Escherichia fergusonii (strain ATCC 35469 / DSM 13698 / CCUG 18766 / IAM 14443 / JCM 21226 / LMG 7866 / NBRC 102419 / NCTC 12128 / CDC 0568-73)</name>
    <dbReference type="NCBI Taxonomy" id="585054"/>
    <lineage>
        <taxon>Bacteria</taxon>
        <taxon>Pseudomonadati</taxon>
        <taxon>Pseudomonadota</taxon>
        <taxon>Gammaproteobacteria</taxon>
        <taxon>Enterobacterales</taxon>
        <taxon>Enterobacteriaceae</taxon>
        <taxon>Escherichia</taxon>
    </lineage>
</organism>
<protein>
    <recommendedName>
        <fullName evidence="1">N-acetylmuramic acid 6-phosphate etherase</fullName>
        <shortName evidence="1">MurNAc-6-P etherase</shortName>
        <ecNumber evidence="1">4.2.1.126</ecNumber>
    </recommendedName>
    <alternativeName>
        <fullName evidence="1">N-acetylmuramic acid 6-phosphate hydrolase</fullName>
    </alternativeName>
    <alternativeName>
        <fullName evidence="1">N-acetylmuramic acid 6-phosphate lyase</fullName>
    </alternativeName>
</protein>
<gene>
    <name evidence="1" type="primary">murQ</name>
    <name type="ordered locus">EFER_0744</name>
</gene>
<keyword id="KW-0119">Carbohydrate metabolism</keyword>
<keyword id="KW-0456">Lyase</keyword>
<evidence type="ECO:0000255" key="1">
    <source>
        <dbReference type="HAMAP-Rule" id="MF_00068"/>
    </source>
</evidence>
<name>MURQ_ESCF3</name>